<keyword id="KW-0963">Cytoplasm</keyword>
<keyword id="KW-0444">Lipid biosynthesis</keyword>
<keyword id="KW-0443">Lipid metabolism</keyword>
<keyword id="KW-0520">NAD</keyword>
<keyword id="KW-0521">NADP</keyword>
<keyword id="KW-0547">Nucleotide-binding</keyword>
<keyword id="KW-0560">Oxidoreductase</keyword>
<keyword id="KW-0594">Phospholipid biosynthesis</keyword>
<keyword id="KW-1208">Phospholipid metabolism</keyword>
<keyword id="KW-1185">Reference proteome</keyword>
<protein>
    <recommendedName>
        <fullName evidence="1">Glycerol-3-phosphate dehydrogenase [NAD(P)+]</fullName>
        <ecNumber evidence="1">1.1.1.94</ecNumber>
    </recommendedName>
    <alternativeName>
        <fullName evidence="1">NAD(P)(+)-dependent glycerol-3-phosphate dehydrogenase</fullName>
    </alternativeName>
    <alternativeName>
        <fullName evidence="1">NAD(P)H-dependent dihydroxyacetone-phosphate reductase</fullName>
    </alternativeName>
</protein>
<feature type="chain" id="PRO_0000138036" description="Glycerol-3-phosphate dehydrogenase [NAD(P)+]">
    <location>
        <begin position="1"/>
        <end position="336"/>
    </location>
</feature>
<feature type="active site" description="Proton acceptor" evidence="1">
    <location>
        <position position="194"/>
    </location>
</feature>
<feature type="binding site" evidence="1">
    <location>
        <position position="14"/>
    </location>
    <ligand>
        <name>NADPH</name>
        <dbReference type="ChEBI" id="CHEBI:57783"/>
    </ligand>
</feature>
<feature type="binding site" evidence="1">
    <location>
        <position position="15"/>
    </location>
    <ligand>
        <name>NADPH</name>
        <dbReference type="ChEBI" id="CHEBI:57783"/>
    </ligand>
</feature>
<feature type="binding site" evidence="1">
    <location>
        <position position="35"/>
    </location>
    <ligand>
        <name>NADPH</name>
        <dbReference type="ChEBI" id="CHEBI:57783"/>
    </ligand>
</feature>
<feature type="binding site" evidence="1">
    <location>
        <position position="36"/>
    </location>
    <ligand>
        <name>NADPH</name>
        <dbReference type="ChEBI" id="CHEBI:57783"/>
    </ligand>
</feature>
<feature type="binding site" evidence="1">
    <location>
        <position position="109"/>
    </location>
    <ligand>
        <name>NADPH</name>
        <dbReference type="ChEBI" id="CHEBI:57783"/>
    </ligand>
</feature>
<feature type="binding site" evidence="1">
    <location>
        <position position="109"/>
    </location>
    <ligand>
        <name>sn-glycerol 3-phosphate</name>
        <dbReference type="ChEBI" id="CHEBI:57597"/>
    </ligand>
</feature>
<feature type="binding site" evidence="1">
    <location>
        <position position="139"/>
    </location>
    <ligand>
        <name>sn-glycerol 3-phosphate</name>
        <dbReference type="ChEBI" id="CHEBI:57597"/>
    </ligand>
</feature>
<feature type="binding site" evidence="1">
    <location>
        <position position="143"/>
    </location>
    <ligand>
        <name>NADPH</name>
        <dbReference type="ChEBI" id="CHEBI:57783"/>
    </ligand>
</feature>
<feature type="binding site" evidence="1">
    <location>
        <position position="194"/>
    </location>
    <ligand>
        <name>sn-glycerol 3-phosphate</name>
        <dbReference type="ChEBI" id="CHEBI:57597"/>
    </ligand>
</feature>
<feature type="binding site" evidence="1">
    <location>
        <position position="247"/>
    </location>
    <ligand>
        <name>sn-glycerol 3-phosphate</name>
        <dbReference type="ChEBI" id="CHEBI:57597"/>
    </ligand>
</feature>
<feature type="binding site" evidence="1">
    <location>
        <position position="257"/>
    </location>
    <ligand>
        <name>sn-glycerol 3-phosphate</name>
        <dbReference type="ChEBI" id="CHEBI:57597"/>
    </ligand>
</feature>
<feature type="binding site" evidence="1">
    <location>
        <position position="258"/>
    </location>
    <ligand>
        <name>NADPH</name>
        <dbReference type="ChEBI" id="CHEBI:57783"/>
    </ligand>
</feature>
<feature type="binding site" evidence="1">
    <location>
        <position position="258"/>
    </location>
    <ligand>
        <name>sn-glycerol 3-phosphate</name>
        <dbReference type="ChEBI" id="CHEBI:57597"/>
    </ligand>
</feature>
<feature type="binding site" evidence="1">
    <location>
        <position position="259"/>
    </location>
    <ligand>
        <name>sn-glycerol 3-phosphate</name>
        <dbReference type="ChEBI" id="CHEBI:57597"/>
    </ligand>
</feature>
<feature type="binding site" evidence="1">
    <location>
        <position position="284"/>
    </location>
    <ligand>
        <name>NADPH</name>
        <dbReference type="ChEBI" id="CHEBI:57783"/>
    </ligand>
</feature>
<reference key="1">
    <citation type="journal article" date="2002" name="Nature">
        <title>Complete genome sequence of the model actinomycete Streptomyces coelicolor A3(2).</title>
        <authorList>
            <person name="Bentley S.D."/>
            <person name="Chater K.F."/>
            <person name="Cerdeno-Tarraga A.-M."/>
            <person name="Challis G.L."/>
            <person name="Thomson N.R."/>
            <person name="James K.D."/>
            <person name="Harris D.E."/>
            <person name="Quail M.A."/>
            <person name="Kieser H."/>
            <person name="Harper D."/>
            <person name="Bateman A."/>
            <person name="Brown S."/>
            <person name="Chandra G."/>
            <person name="Chen C.W."/>
            <person name="Collins M."/>
            <person name="Cronin A."/>
            <person name="Fraser A."/>
            <person name="Goble A."/>
            <person name="Hidalgo J."/>
            <person name="Hornsby T."/>
            <person name="Howarth S."/>
            <person name="Huang C.-H."/>
            <person name="Kieser T."/>
            <person name="Larke L."/>
            <person name="Murphy L.D."/>
            <person name="Oliver K."/>
            <person name="O'Neil S."/>
            <person name="Rabbinowitsch E."/>
            <person name="Rajandream M.A."/>
            <person name="Rutherford K.M."/>
            <person name="Rutter S."/>
            <person name="Seeger K."/>
            <person name="Saunders D."/>
            <person name="Sharp S."/>
            <person name="Squares R."/>
            <person name="Squares S."/>
            <person name="Taylor K."/>
            <person name="Warren T."/>
            <person name="Wietzorrek A."/>
            <person name="Woodward J.R."/>
            <person name="Barrell B.G."/>
            <person name="Parkhill J."/>
            <person name="Hopwood D.A."/>
        </authorList>
    </citation>
    <scope>NUCLEOTIDE SEQUENCE [LARGE SCALE GENOMIC DNA]</scope>
    <source>
        <strain>ATCC BAA-471 / A3(2) / M145</strain>
    </source>
</reference>
<name>GPDA_STRCO</name>
<gene>
    <name evidence="1" type="primary">gpsA</name>
    <name type="ordered locus">SCO5559</name>
    <name type="ORF">SC7A1.03</name>
</gene>
<organism>
    <name type="scientific">Streptomyces coelicolor (strain ATCC BAA-471 / A3(2) / M145)</name>
    <dbReference type="NCBI Taxonomy" id="100226"/>
    <lineage>
        <taxon>Bacteria</taxon>
        <taxon>Bacillati</taxon>
        <taxon>Actinomycetota</taxon>
        <taxon>Actinomycetes</taxon>
        <taxon>Kitasatosporales</taxon>
        <taxon>Streptomycetaceae</taxon>
        <taxon>Streptomyces</taxon>
        <taxon>Streptomyces albidoflavus group</taxon>
    </lineage>
</organism>
<accession>Q9ZBS0</accession>
<dbReference type="EC" id="1.1.1.94" evidence="1"/>
<dbReference type="EMBL" id="AL939124">
    <property type="protein sequence ID" value="CAA22402.1"/>
    <property type="molecule type" value="Genomic_DNA"/>
</dbReference>
<dbReference type="PIR" id="T35643">
    <property type="entry name" value="T35643"/>
</dbReference>
<dbReference type="RefSeq" id="NP_629694.1">
    <property type="nucleotide sequence ID" value="NC_003888.3"/>
</dbReference>
<dbReference type="RefSeq" id="WP_011030308.1">
    <property type="nucleotide sequence ID" value="NZ_VNID01000011.1"/>
</dbReference>
<dbReference type="SMR" id="Q9ZBS0"/>
<dbReference type="FunCoup" id="Q9ZBS0">
    <property type="interactions" value="327"/>
</dbReference>
<dbReference type="STRING" id="100226.gene:17763217"/>
<dbReference type="PaxDb" id="100226-SCO5559"/>
<dbReference type="KEGG" id="sco:SCO5559"/>
<dbReference type="PATRIC" id="fig|100226.15.peg.5648"/>
<dbReference type="eggNOG" id="COG0240">
    <property type="taxonomic scope" value="Bacteria"/>
</dbReference>
<dbReference type="HOGENOM" id="CLU_033449_0_2_11"/>
<dbReference type="InParanoid" id="Q9ZBS0"/>
<dbReference type="OrthoDB" id="9812273at2"/>
<dbReference type="PhylomeDB" id="Q9ZBS0"/>
<dbReference type="UniPathway" id="UPA00940"/>
<dbReference type="Proteomes" id="UP000001973">
    <property type="component" value="Chromosome"/>
</dbReference>
<dbReference type="GO" id="GO:0005829">
    <property type="term" value="C:cytosol"/>
    <property type="evidence" value="ECO:0000318"/>
    <property type="project" value="GO_Central"/>
</dbReference>
<dbReference type="GO" id="GO:0047952">
    <property type="term" value="F:glycerol-3-phosphate dehydrogenase [NAD(P)+] activity"/>
    <property type="evidence" value="ECO:0000318"/>
    <property type="project" value="GO_Central"/>
</dbReference>
<dbReference type="GO" id="GO:0051287">
    <property type="term" value="F:NAD binding"/>
    <property type="evidence" value="ECO:0007669"/>
    <property type="project" value="InterPro"/>
</dbReference>
<dbReference type="GO" id="GO:0005975">
    <property type="term" value="P:carbohydrate metabolic process"/>
    <property type="evidence" value="ECO:0007669"/>
    <property type="project" value="InterPro"/>
</dbReference>
<dbReference type="GO" id="GO:0046167">
    <property type="term" value="P:glycerol-3-phosphate biosynthetic process"/>
    <property type="evidence" value="ECO:0007669"/>
    <property type="project" value="UniProtKB-UniRule"/>
</dbReference>
<dbReference type="GO" id="GO:0046168">
    <property type="term" value="P:glycerol-3-phosphate catabolic process"/>
    <property type="evidence" value="ECO:0007669"/>
    <property type="project" value="InterPro"/>
</dbReference>
<dbReference type="GO" id="GO:0006072">
    <property type="term" value="P:glycerol-3-phosphate metabolic process"/>
    <property type="evidence" value="ECO:0000318"/>
    <property type="project" value="GO_Central"/>
</dbReference>
<dbReference type="GO" id="GO:0006650">
    <property type="term" value="P:glycerophospholipid metabolic process"/>
    <property type="evidence" value="ECO:0007669"/>
    <property type="project" value="UniProtKB-UniRule"/>
</dbReference>
<dbReference type="GO" id="GO:0008654">
    <property type="term" value="P:phospholipid biosynthetic process"/>
    <property type="evidence" value="ECO:0007669"/>
    <property type="project" value="UniProtKB-KW"/>
</dbReference>
<dbReference type="FunFam" id="1.10.1040.10:FF:000001">
    <property type="entry name" value="Glycerol-3-phosphate dehydrogenase [NAD(P)+]"/>
    <property type="match status" value="1"/>
</dbReference>
<dbReference type="FunFam" id="3.40.50.720:FF:000019">
    <property type="entry name" value="Glycerol-3-phosphate dehydrogenase [NAD(P)+]"/>
    <property type="match status" value="1"/>
</dbReference>
<dbReference type="Gene3D" id="1.10.1040.10">
    <property type="entry name" value="N-(1-d-carboxylethyl)-l-norvaline Dehydrogenase, domain 2"/>
    <property type="match status" value="1"/>
</dbReference>
<dbReference type="Gene3D" id="3.40.50.720">
    <property type="entry name" value="NAD(P)-binding Rossmann-like Domain"/>
    <property type="match status" value="1"/>
</dbReference>
<dbReference type="HAMAP" id="MF_00394">
    <property type="entry name" value="NAD_Glyc3P_dehydrog"/>
    <property type="match status" value="1"/>
</dbReference>
<dbReference type="InterPro" id="IPR008927">
    <property type="entry name" value="6-PGluconate_DH-like_C_sf"/>
</dbReference>
<dbReference type="InterPro" id="IPR013328">
    <property type="entry name" value="6PGD_dom2"/>
</dbReference>
<dbReference type="InterPro" id="IPR006168">
    <property type="entry name" value="G3P_DH_NAD-dep"/>
</dbReference>
<dbReference type="InterPro" id="IPR006109">
    <property type="entry name" value="G3P_DH_NAD-dep_C"/>
</dbReference>
<dbReference type="InterPro" id="IPR011128">
    <property type="entry name" value="G3P_DH_NAD-dep_N"/>
</dbReference>
<dbReference type="InterPro" id="IPR036291">
    <property type="entry name" value="NAD(P)-bd_dom_sf"/>
</dbReference>
<dbReference type="NCBIfam" id="NF000940">
    <property type="entry name" value="PRK00094.1-2"/>
    <property type="match status" value="1"/>
</dbReference>
<dbReference type="NCBIfam" id="NF000942">
    <property type="entry name" value="PRK00094.1-4"/>
    <property type="match status" value="1"/>
</dbReference>
<dbReference type="PANTHER" id="PTHR11728">
    <property type="entry name" value="GLYCEROL-3-PHOSPHATE DEHYDROGENASE"/>
    <property type="match status" value="1"/>
</dbReference>
<dbReference type="PANTHER" id="PTHR11728:SF1">
    <property type="entry name" value="GLYCEROL-3-PHOSPHATE DEHYDROGENASE [NAD(+)] 2, CHLOROPLASTIC"/>
    <property type="match status" value="1"/>
</dbReference>
<dbReference type="Pfam" id="PF07479">
    <property type="entry name" value="NAD_Gly3P_dh_C"/>
    <property type="match status" value="1"/>
</dbReference>
<dbReference type="Pfam" id="PF01210">
    <property type="entry name" value="NAD_Gly3P_dh_N"/>
    <property type="match status" value="1"/>
</dbReference>
<dbReference type="PIRSF" id="PIRSF000114">
    <property type="entry name" value="Glycerol-3-P_dh"/>
    <property type="match status" value="1"/>
</dbReference>
<dbReference type="PRINTS" id="PR00077">
    <property type="entry name" value="GPDHDRGNASE"/>
</dbReference>
<dbReference type="SUPFAM" id="SSF48179">
    <property type="entry name" value="6-phosphogluconate dehydrogenase C-terminal domain-like"/>
    <property type="match status" value="1"/>
</dbReference>
<dbReference type="SUPFAM" id="SSF51735">
    <property type="entry name" value="NAD(P)-binding Rossmann-fold domains"/>
    <property type="match status" value="1"/>
</dbReference>
<dbReference type="PROSITE" id="PS00957">
    <property type="entry name" value="NAD_G3PDH"/>
    <property type="match status" value="1"/>
</dbReference>
<proteinExistence type="inferred from homology"/>
<comment type="function">
    <text evidence="1">Catalyzes the reduction of the glycolytic intermediate dihydroxyacetone phosphate (DHAP) to sn-glycerol 3-phosphate (G3P), the key precursor for phospholipid synthesis.</text>
</comment>
<comment type="catalytic activity">
    <reaction evidence="1">
        <text>sn-glycerol 3-phosphate + NAD(+) = dihydroxyacetone phosphate + NADH + H(+)</text>
        <dbReference type="Rhea" id="RHEA:11092"/>
        <dbReference type="ChEBI" id="CHEBI:15378"/>
        <dbReference type="ChEBI" id="CHEBI:57540"/>
        <dbReference type="ChEBI" id="CHEBI:57597"/>
        <dbReference type="ChEBI" id="CHEBI:57642"/>
        <dbReference type="ChEBI" id="CHEBI:57945"/>
        <dbReference type="EC" id="1.1.1.94"/>
    </reaction>
    <physiologicalReaction direction="right-to-left" evidence="1">
        <dbReference type="Rhea" id="RHEA:11094"/>
    </physiologicalReaction>
</comment>
<comment type="catalytic activity">
    <reaction evidence="1">
        <text>sn-glycerol 3-phosphate + NADP(+) = dihydroxyacetone phosphate + NADPH + H(+)</text>
        <dbReference type="Rhea" id="RHEA:11096"/>
        <dbReference type="ChEBI" id="CHEBI:15378"/>
        <dbReference type="ChEBI" id="CHEBI:57597"/>
        <dbReference type="ChEBI" id="CHEBI:57642"/>
        <dbReference type="ChEBI" id="CHEBI:57783"/>
        <dbReference type="ChEBI" id="CHEBI:58349"/>
        <dbReference type="EC" id="1.1.1.94"/>
    </reaction>
    <physiologicalReaction direction="right-to-left" evidence="1">
        <dbReference type="Rhea" id="RHEA:11098"/>
    </physiologicalReaction>
</comment>
<comment type="pathway">
    <text evidence="1">Membrane lipid metabolism; glycerophospholipid metabolism.</text>
</comment>
<comment type="subcellular location">
    <subcellularLocation>
        <location evidence="1">Cytoplasm</location>
    </subcellularLocation>
</comment>
<comment type="similarity">
    <text evidence="1">Belongs to the NAD-dependent glycerol-3-phosphate dehydrogenase family.</text>
</comment>
<sequence>MSKPVKAAVFGTGSWGTAFGTVLADAGCEVTLWGRRAALADAVNSTRTNPDYLPGVELPENLRATTDAAEAARDADFTVLAVPSQTLRAGLADWTPLLAPGTVLVSLMKGVELGSAMRMSEVIGDVAKVGAERIAVVTGPNLAREIAARMPAAAVVACPDETVAQRLQAACHTPYFRPYTNTDVVGCELGGAVKNVIGLAVGIADGMGLGDNAKGSLITRGLAETTRLGVALGADPLTFSGLAGLGDLVATCSSPLSRNHTFGTNLGKGMTLEETNAVTKQTAEGVKSCESVLDLARRHGVDMPITETVVAIVHEGKSPVVAVKELMSRSAKPERR</sequence>
<evidence type="ECO:0000255" key="1">
    <source>
        <dbReference type="HAMAP-Rule" id="MF_00394"/>
    </source>
</evidence>